<organism>
    <name type="scientific">Bradyrhizobium diazoefficiens (strain JCM 10833 / BCRC 13528 / IAM 13628 / NBRC 14792 / USDA 110)</name>
    <dbReference type="NCBI Taxonomy" id="224911"/>
    <lineage>
        <taxon>Bacteria</taxon>
        <taxon>Pseudomonadati</taxon>
        <taxon>Pseudomonadota</taxon>
        <taxon>Alphaproteobacteria</taxon>
        <taxon>Hyphomicrobiales</taxon>
        <taxon>Nitrobacteraceae</taxon>
        <taxon>Bradyrhizobium</taxon>
    </lineage>
</organism>
<reference key="1">
    <citation type="journal article" date="1984" name="Mol. Gen. Genet.">
        <title>Fine structure analysis of the nifDK operon encoding the alpha and beta subunits of dinitrogenase from Rhizobium japonicum.</title>
        <authorList>
            <person name="Kaluza K."/>
            <person name="Hennecke H."/>
        </authorList>
    </citation>
    <scope>NUCLEOTIDE SEQUENCE [GENOMIC DNA]</scope>
    <source>
        <strain>JCM 10833 / BCRC 13528 / IAM 13628 / NBRC 14792 / USDA 110</strain>
    </source>
</reference>
<reference key="2">
    <citation type="journal article" date="2001" name="J. Bacteriol.">
        <title>Potential symbiosis-specific genes uncovered by sequencing a 410-kb DNA region of the Bradyrhizobium japonicum chromosome.</title>
        <authorList>
            <person name="Goettfert M."/>
            <person name="Roethlisberger S."/>
            <person name="Kuendig C."/>
            <person name="Beck C."/>
            <person name="Marty R."/>
            <person name="Hennecke H."/>
        </authorList>
    </citation>
    <scope>NUCLEOTIDE SEQUENCE [GENOMIC DNA]</scope>
    <source>
        <strain>USDA 110spc4</strain>
    </source>
</reference>
<reference key="3">
    <citation type="journal article" date="2002" name="DNA Res.">
        <title>Complete genomic sequence of nitrogen-fixing symbiotic bacterium Bradyrhizobium japonicum USDA110.</title>
        <authorList>
            <person name="Kaneko T."/>
            <person name="Nakamura Y."/>
            <person name="Sato S."/>
            <person name="Minamisawa K."/>
            <person name="Uchiumi T."/>
            <person name="Sasamoto S."/>
            <person name="Watanabe A."/>
            <person name="Idesawa K."/>
            <person name="Iriguchi M."/>
            <person name="Kawashima K."/>
            <person name="Kohara M."/>
            <person name="Matsumoto M."/>
            <person name="Shimpo S."/>
            <person name="Tsuruoka H."/>
            <person name="Wada T."/>
            <person name="Yamada M."/>
            <person name="Tabata S."/>
        </authorList>
    </citation>
    <scope>NUCLEOTIDE SEQUENCE [LARGE SCALE GENOMIC DNA]</scope>
    <source>
        <strain>JCM 10833 / BCRC 13528 / IAM 13628 / NBRC 14792 / USDA 110</strain>
    </source>
</reference>
<reference key="4">
    <citation type="journal article" date="1984" name="J. Mol. Appl. Genet.">
        <title>The nifH and nifDK promoter regions from Rhizobium japonicum share structural homologies with each other and with nitrogen-regulated promoters from other organisms.</title>
        <authorList>
            <person name="Adams T.H."/>
            <person name="Chelm B.K."/>
        </authorList>
    </citation>
    <scope>NUCLEOTIDE SEQUENCE [GENOMIC DNA] OF 1-116</scope>
    <source>
        <strain>JCM 10833 / BCRC 13528 / IAM 13628 / NBRC 14792 / USDA 110</strain>
    </source>
</reference>
<reference key="5">
    <citation type="journal article" date="1985" name="Mol. Gen. Genet.">
        <title>Structural and functional homology between the alpha and beta subunits of the nitrogenase MoFe protein as revealed by sequencing the Rhizobium japonicum nifK gene.</title>
        <authorList>
            <person name="Thoeny B."/>
            <person name="Kaluza K."/>
            <person name="Hennecke H."/>
        </authorList>
    </citation>
    <scope>NUCLEOTIDE SEQUENCE [GENOMIC DNA] OF 496-500</scope>
    <source>
        <strain>JCM 10833 / BCRC 13528 / IAM 13628 / NBRC 14792 / USDA 110</strain>
    </source>
</reference>
<proteinExistence type="inferred from homology"/>
<feature type="chain" id="PRO_0000153061" description="Nitrogenase molybdenum-iron protein alpha chain">
    <location>
        <begin position="1"/>
        <end position="500"/>
    </location>
</feature>
<feature type="binding site" evidence="1">
    <location>
        <position position="67"/>
    </location>
    <ligand>
        <name>[8Fe-7S] cluster</name>
        <dbReference type="ChEBI" id="CHEBI:21143"/>
        <note>ligand shared with beta chain</note>
    </ligand>
</feature>
<feature type="binding site" evidence="1">
    <location>
        <position position="93"/>
    </location>
    <ligand>
        <name>[8Fe-7S] cluster</name>
        <dbReference type="ChEBI" id="CHEBI:21143"/>
        <note>ligand shared with beta chain</note>
    </ligand>
</feature>
<feature type="binding site" evidence="1">
    <location>
        <position position="159"/>
    </location>
    <ligand>
        <name>[8Fe-7S] cluster</name>
        <dbReference type="ChEBI" id="CHEBI:21143"/>
        <note>ligand shared with beta chain</note>
    </ligand>
</feature>
<feature type="binding site" evidence="1">
    <location>
        <position position="283"/>
    </location>
    <ligand>
        <name>[7Fe-Mo-9S-C-homocitryl] cluster</name>
        <dbReference type="ChEBI" id="CHEBI:30409"/>
    </ligand>
</feature>
<feature type="binding site" evidence="1">
    <location>
        <position position="451"/>
    </location>
    <ligand>
        <name>[7Fe-Mo-9S-C-homocitryl] cluster</name>
        <dbReference type="ChEBI" id="CHEBI:30409"/>
    </ligand>
</feature>
<feature type="sequence conflict" description="In Ref. 4; AAA26310." evidence="2" ref="4">
    <original>L</original>
    <variation>P</variation>
    <location>
        <position position="24"/>
    </location>
</feature>
<feature type="sequence conflict" description="In Ref. 4; AAA26310." evidence="2" ref="4">
    <original>A</original>
    <variation>R</variation>
    <location>
        <position position="36"/>
    </location>
</feature>
<feature type="sequence conflict" description="In Ref. 4; AAA26310." evidence="2" ref="4">
    <original>I</original>
    <variation>R</variation>
    <location>
        <position position="58"/>
    </location>
</feature>
<feature type="sequence conflict" description="In Ref. 4; AAA26310." evidence="2" ref="4">
    <original>R</original>
    <variation>G</variation>
    <location>
        <position position="101"/>
    </location>
</feature>
<feature type="sequence conflict" description="In Ref. 1; CAA25523." evidence="2" ref="1">
    <original>K</original>
    <variation>R</variation>
    <location>
        <position position="424"/>
    </location>
</feature>
<feature type="sequence conflict" description="In Ref. 1; AAA26325." evidence="2" ref="1">
    <original>EAPSAKLQAAE</original>
    <variation>DAERQDSRLQNNATRLALRESPGIPI</variation>
    <location>
        <begin position="490"/>
        <end position="500"/>
    </location>
</feature>
<feature type="sequence conflict" description="In Ref. 5." evidence="2" ref="5">
    <original>AAE</original>
    <variation>NNATRLALRESPGIPI</variation>
    <location>
        <begin position="498"/>
        <end position="500"/>
    </location>
</feature>
<evidence type="ECO:0000250" key="1"/>
<evidence type="ECO:0000305" key="2"/>
<name>NIFD_BRADU</name>
<protein>
    <recommendedName>
        <fullName>Nitrogenase molybdenum-iron protein alpha chain</fullName>
        <ecNumber>1.18.6.1</ecNumber>
    </recommendedName>
    <alternativeName>
        <fullName>Dinitrogenase</fullName>
    </alternativeName>
    <alternativeName>
        <fullName>Nitrogenase component I</fullName>
    </alternativeName>
</protein>
<gene>
    <name type="primary">nifD</name>
    <name type="ordered locus">blr1743</name>
</gene>
<keyword id="KW-0067">ATP-binding</keyword>
<keyword id="KW-0408">Iron</keyword>
<keyword id="KW-0411">Iron-sulfur</keyword>
<keyword id="KW-0479">Metal-binding</keyword>
<keyword id="KW-0500">Molybdenum</keyword>
<keyword id="KW-0535">Nitrogen fixation</keyword>
<keyword id="KW-0547">Nucleotide-binding</keyword>
<keyword id="KW-0560">Oxidoreductase</keyword>
<keyword id="KW-1185">Reference proteome</keyword>
<sequence length="500" mass="56157">MSLATTNSVAEIRARNKELIEEVLKVYPEKTAKRRAKHLNVHQAGKSDCGVKSNIKSIPGVMTIRGCAYAGSKGVVWGPIKDMVHISHGPVGCGQYSWGSRRNYYVGTTGIDSFVTLQFTSDFQEKDIVFGGDKKLDKILDEIQELFPLNNGITIQSECPVGLIGDDIEAVSRAKSKEYGGKTIVPVRCEGFRGVSQSLGHHIANDAVRDWIFGHIEAEGKPKFEPTPYDVAIIGDYNIGGDAWSSRILLEEMGLRVIAQWSGDGSLAELEATPKAKLNILHCYRSMNYISRHMEEKFGIPWCEYNFFGPSKIADSLRRIAGYFDDKIKEGAERVIEKYQPLVDAVIAKYRPRLEGKTVMLYVGGLRPRHVIGAYEDLGMDVIGTGYEFGHNDDYQRTAQHYVKDSTLIYDDVNGYEFERFVEKLQPDLVGSGIKEKYVFQKMSVPFRQMHSWDYSGPYHGYDGFAIFARDMDMAVNSPIWKRTKAPWKEAPSAKLQAAE</sequence>
<dbReference type="EC" id="1.18.6.1"/>
<dbReference type="EMBL" id="X01045">
    <property type="protein sequence ID" value="CAA25523.1"/>
    <property type="molecule type" value="Genomic_DNA"/>
</dbReference>
<dbReference type="EMBL" id="AH010242">
    <property type="protein sequence ID" value="AAG60729.1"/>
    <property type="molecule type" value="Genomic_DNA"/>
</dbReference>
<dbReference type="EMBL" id="BA000040">
    <property type="protein sequence ID" value="BAC47008.1"/>
    <property type="molecule type" value="Genomic_DNA"/>
</dbReference>
<dbReference type="EMBL" id="K01621">
    <property type="protein sequence ID" value="AAA26310.1"/>
    <property type="molecule type" value="Genomic_DNA"/>
</dbReference>
<dbReference type="EMBL" id="M64591">
    <property type="protein sequence ID" value="AAA26325.1"/>
    <property type="molecule type" value="Genomic_DNA"/>
</dbReference>
<dbReference type="PIR" id="S07301">
    <property type="entry name" value="NIZJAM"/>
</dbReference>
<dbReference type="RefSeq" id="NP_768383.1">
    <property type="nucleotide sequence ID" value="NC_004463.1"/>
</dbReference>
<dbReference type="RefSeq" id="WP_011084552.1">
    <property type="nucleotide sequence ID" value="NZ_CP011360.1"/>
</dbReference>
<dbReference type="SMR" id="P06121"/>
<dbReference type="STRING" id="224911.AAV28_05645"/>
<dbReference type="EnsemblBacteria" id="BAC47008">
    <property type="protein sequence ID" value="BAC47008"/>
    <property type="gene ID" value="BAC47008"/>
</dbReference>
<dbReference type="GeneID" id="93214631"/>
<dbReference type="KEGG" id="bja:blr1743"/>
<dbReference type="PATRIC" id="fig|224911.44.peg.1208"/>
<dbReference type="eggNOG" id="COG2710">
    <property type="taxonomic scope" value="Bacteria"/>
</dbReference>
<dbReference type="HOGENOM" id="CLU_025876_1_1_5"/>
<dbReference type="InParanoid" id="P06121"/>
<dbReference type="OrthoDB" id="9762718at2"/>
<dbReference type="PhylomeDB" id="P06121"/>
<dbReference type="Proteomes" id="UP000002526">
    <property type="component" value="Chromosome"/>
</dbReference>
<dbReference type="GO" id="GO:0016612">
    <property type="term" value="C:molybdenum-iron nitrogenase complex"/>
    <property type="evidence" value="ECO:0007669"/>
    <property type="project" value="InterPro"/>
</dbReference>
<dbReference type="GO" id="GO:0005524">
    <property type="term" value="F:ATP binding"/>
    <property type="evidence" value="ECO:0007669"/>
    <property type="project" value="UniProtKB-KW"/>
</dbReference>
<dbReference type="GO" id="GO:0051536">
    <property type="term" value="F:iron-sulfur cluster binding"/>
    <property type="evidence" value="ECO:0007669"/>
    <property type="project" value="UniProtKB-KW"/>
</dbReference>
<dbReference type="GO" id="GO:0046872">
    <property type="term" value="F:metal ion binding"/>
    <property type="evidence" value="ECO:0007669"/>
    <property type="project" value="UniProtKB-KW"/>
</dbReference>
<dbReference type="GO" id="GO:0016163">
    <property type="term" value="F:nitrogenase activity"/>
    <property type="evidence" value="ECO:0007669"/>
    <property type="project" value="UniProtKB-EC"/>
</dbReference>
<dbReference type="GO" id="GO:0009399">
    <property type="term" value="P:nitrogen fixation"/>
    <property type="evidence" value="ECO:0007669"/>
    <property type="project" value="UniProtKB-KW"/>
</dbReference>
<dbReference type="CDD" id="cd01976">
    <property type="entry name" value="Nitrogenase_MoFe_alpha"/>
    <property type="match status" value="1"/>
</dbReference>
<dbReference type="Gene3D" id="3.40.50.1980">
    <property type="entry name" value="Nitrogenase molybdenum iron protein domain"/>
    <property type="match status" value="3"/>
</dbReference>
<dbReference type="InterPro" id="IPR000510">
    <property type="entry name" value="Nase/OxRdtase_comp1"/>
</dbReference>
<dbReference type="InterPro" id="IPR010143">
    <property type="entry name" value="Nase_comp1_asu"/>
</dbReference>
<dbReference type="InterPro" id="IPR000318">
    <property type="entry name" value="Nase_comp1_CS"/>
</dbReference>
<dbReference type="InterPro" id="IPR005972">
    <property type="entry name" value="Nase_Mo-Fe_asu"/>
</dbReference>
<dbReference type="NCBIfam" id="TIGR01862">
    <property type="entry name" value="N2-ase-Ialpha"/>
    <property type="match status" value="1"/>
</dbReference>
<dbReference type="NCBIfam" id="TIGR01282">
    <property type="entry name" value="nifD"/>
    <property type="match status" value="1"/>
</dbReference>
<dbReference type="PANTHER" id="PTHR43457">
    <property type="entry name" value="NITROGENASE MOLYBDENUM-IRON PROTEIN ALPHA CHAIN"/>
    <property type="match status" value="1"/>
</dbReference>
<dbReference type="PANTHER" id="PTHR43457:SF1">
    <property type="entry name" value="NITROGENASE MOLYBDENUM-IRON PROTEIN ALPHA CHAIN"/>
    <property type="match status" value="1"/>
</dbReference>
<dbReference type="Pfam" id="PF00148">
    <property type="entry name" value="Oxidored_nitro"/>
    <property type="match status" value="1"/>
</dbReference>
<dbReference type="SUPFAM" id="SSF53807">
    <property type="entry name" value="Helical backbone' metal receptor"/>
    <property type="match status" value="1"/>
</dbReference>
<dbReference type="PROSITE" id="PS00699">
    <property type="entry name" value="NITROGENASE_1_1"/>
    <property type="match status" value="1"/>
</dbReference>
<dbReference type="PROSITE" id="PS00090">
    <property type="entry name" value="NITROGENASE_1_2"/>
    <property type="match status" value="1"/>
</dbReference>
<comment type="function">
    <text>This molybdenum-iron protein is part of the nitrogenase complex that catalyzes the key enzymatic reactions in nitrogen fixation.</text>
</comment>
<comment type="catalytic activity">
    <reaction>
        <text>N2 + 8 reduced [2Fe-2S]-[ferredoxin] + 16 ATP + 16 H2O = H2 + 8 oxidized [2Fe-2S]-[ferredoxin] + 2 NH4(+) + 16 ADP + 16 phosphate + 6 H(+)</text>
        <dbReference type="Rhea" id="RHEA:21448"/>
        <dbReference type="Rhea" id="RHEA-COMP:10000"/>
        <dbReference type="Rhea" id="RHEA-COMP:10001"/>
        <dbReference type="ChEBI" id="CHEBI:15377"/>
        <dbReference type="ChEBI" id="CHEBI:15378"/>
        <dbReference type="ChEBI" id="CHEBI:17997"/>
        <dbReference type="ChEBI" id="CHEBI:18276"/>
        <dbReference type="ChEBI" id="CHEBI:28938"/>
        <dbReference type="ChEBI" id="CHEBI:30616"/>
        <dbReference type="ChEBI" id="CHEBI:33737"/>
        <dbReference type="ChEBI" id="CHEBI:33738"/>
        <dbReference type="ChEBI" id="CHEBI:43474"/>
        <dbReference type="ChEBI" id="CHEBI:456216"/>
        <dbReference type="EC" id="1.18.6.1"/>
    </reaction>
</comment>
<comment type="cofactor">
    <cofactor evidence="1">
        <name>[8Fe-7S] cluster</name>
        <dbReference type="ChEBI" id="CHEBI:21143"/>
    </cofactor>
    <text evidence="1">Binds 1 [8Fe-7S] cluster per heterodimer.</text>
</comment>
<comment type="cofactor">
    <cofactor evidence="1">
        <name>[7Fe-Mo-9S-C-homocitryl] cluster</name>
        <dbReference type="ChEBI" id="CHEBI:30409"/>
    </cofactor>
    <text evidence="1">Binds 1 [7Fe-Mo-9S-C-homocitryl] cluster per subunit.</text>
</comment>
<comment type="subunit">
    <text>Tetramer of two alpha and two beta chains. Forms complex with the iron protein (nitrogenase component 2).</text>
</comment>
<comment type="similarity">
    <text evidence="2">Belongs to the NifD/NifK/NifE/NifN family.</text>
</comment>
<accession>P06121</accession>
<accession>Q52767</accession>
<accession>Q9ANN5</accession>